<organism>
    <name type="scientific">Ateles belzebuth</name>
    <name type="common">White-bellied spider monkey</name>
    <dbReference type="NCBI Taxonomy" id="9507"/>
    <lineage>
        <taxon>Eukaryota</taxon>
        <taxon>Metazoa</taxon>
        <taxon>Chordata</taxon>
        <taxon>Craniata</taxon>
        <taxon>Vertebrata</taxon>
        <taxon>Euteleostomi</taxon>
        <taxon>Mammalia</taxon>
        <taxon>Eutheria</taxon>
        <taxon>Euarchontoglires</taxon>
        <taxon>Primates</taxon>
        <taxon>Haplorrhini</taxon>
        <taxon>Platyrrhini</taxon>
        <taxon>Atelidae</taxon>
        <taxon>Atelinae</taxon>
        <taxon>Ateles</taxon>
    </lineage>
</organism>
<comment type="function">
    <text>Involved in oxygen transport from the lung to the various peripheral tissues.</text>
</comment>
<comment type="subunit">
    <text>Heterotetramer of two alpha chains and two beta chains.</text>
</comment>
<comment type="tissue specificity">
    <text>Red blood cells.</text>
</comment>
<comment type="similarity">
    <text evidence="4">Belongs to the globin family.</text>
</comment>
<reference key="1">
    <citation type="journal article" date="1971" name="Biochem. Genet.">
        <title>Primate hemoglobins: some sequences and some proposals concerning the character of evolution and mutation.</title>
        <authorList>
            <person name="Boyer S.H."/>
            <person name="Crosby E.F."/>
            <person name="Noyes A.N."/>
            <person name="Fuller G.F."/>
            <person name="Leslie S.E."/>
            <person name="Donaldson L.J."/>
            <person name="Vrablik G.R."/>
            <person name="Schaefer E.W. Jr."/>
            <person name="Thurmon T.F."/>
        </authorList>
    </citation>
    <scope>PROTEIN SEQUENCE OF 2-147</scope>
</reference>
<protein>
    <recommendedName>
        <fullName>Hemoglobin subunit beta</fullName>
    </recommendedName>
    <alternativeName>
        <fullName>Beta-globin</fullName>
    </alternativeName>
    <alternativeName>
        <fullName>Hemoglobin beta chain</fullName>
    </alternativeName>
</protein>
<feature type="initiator methionine" description="Removed" evidence="1 2">
    <location>
        <position position="1"/>
    </location>
</feature>
<feature type="chain" id="PRO_0000052883" description="Hemoglobin subunit beta">
    <location>
        <begin position="2"/>
        <end position="147"/>
    </location>
</feature>
<feature type="domain" description="Globin" evidence="4">
    <location>
        <begin position="3"/>
        <end position="147"/>
    </location>
</feature>
<feature type="binding site" description="distal binding residue">
    <location>
        <position position="64"/>
    </location>
    <ligand>
        <name>heme b</name>
        <dbReference type="ChEBI" id="CHEBI:60344"/>
    </ligand>
    <ligandPart>
        <name>Fe</name>
        <dbReference type="ChEBI" id="CHEBI:18248"/>
    </ligandPart>
</feature>
<feature type="binding site" description="proximal binding residue">
    <location>
        <position position="93"/>
    </location>
    <ligand>
        <name>heme b</name>
        <dbReference type="ChEBI" id="CHEBI:60344"/>
    </ligand>
    <ligandPart>
        <name>Fe</name>
        <dbReference type="ChEBI" id="CHEBI:18248"/>
    </ligandPart>
</feature>
<feature type="modified residue" description="N-acetylvaline" evidence="1">
    <location>
        <position position="2"/>
    </location>
</feature>
<feature type="modified residue" description="Phosphothreonine" evidence="3">
    <location>
        <position position="13"/>
    </location>
</feature>
<feature type="modified residue" description="Phosphoserine" evidence="3">
    <location>
        <position position="45"/>
    </location>
</feature>
<feature type="modified residue" description="N6-acetyllysine" evidence="3">
    <location>
        <position position="60"/>
    </location>
</feature>
<feature type="modified residue" description="N6-acetyllysine" evidence="3">
    <location>
        <position position="83"/>
    </location>
</feature>
<feature type="modified residue" description="S-nitrosocysteine" evidence="3">
    <location>
        <position position="94"/>
    </location>
</feature>
<feature type="modified residue" description="N6-acetyllysine" evidence="3">
    <location>
        <position position="145"/>
    </location>
</feature>
<gene>
    <name type="primary">HBB</name>
</gene>
<keyword id="KW-0007">Acetylation</keyword>
<keyword id="KW-0903">Direct protein sequencing</keyword>
<keyword id="KW-0349">Heme</keyword>
<keyword id="KW-0408">Iron</keyword>
<keyword id="KW-0479">Metal-binding</keyword>
<keyword id="KW-0561">Oxygen transport</keyword>
<keyword id="KW-0597">Phosphoprotein</keyword>
<keyword id="KW-0702">S-nitrosylation</keyword>
<keyword id="KW-0813">Transport</keyword>
<name>HBB_ATEBE</name>
<dbReference type="PIR" id="B90233">
    <property type="entry name" value="HBMKH"/>
</dbReference>
<dbReference type="SMR" id="P68234"/>
<dbReference type="GO" id="GO:0072562">
    <property type="term" value="C:blood microparticle"/>
    <property type="evidence" value="ECO:0007669"/>
    <property type="project" value="TreeGrafter"/>
</dbReference>
<dbReference type="GO" id="GO:0031838">
    <property type="term" value="C:haptoglobin-hemoglobin complex"/>
    <property type="evidence" value="ECO:0007669"/>
    <property type="project" value="TreeGrafter"/>
</dbReference>
<dbReference type="GO" id="GO:0005833">
    <property type="term" value="C:hemoglobin complex"/>
    <property type="evidence" value="ECO:0007669"/>
    <property type="project" value="InterPro"/>
</dbReference>
<dbReference type="GO" id="GO:0031720">
    <property type="term" value="F:haptoglobin binding"/>
    <property type="evidence" value="ECO:0007669"/>
    <property type="project" value="TreeGrafter"/>
</dbReference>
<dbReference type="GO" id="GO:0020037">
    <property type="term" value="F:heme binding"/>
    <property type="evidence" value="ECO:0007669"/>
    <property type="project" value="InterPro"/>
</dbReference>
<dbReference type="GO" id="GO:0031721">
    <property type="term" value="F:hemoglobin alpha binding"/>
    <property type="evidence" value="ECO:0007669"/>
    <property type="project" value="TreeGrafter"/>
</dbReference>
<dbReference type="GO" id="GO:0046872">
    <property type="term" value="F:metal ion binding"/>
    <property type="evidence" value="ECO:0007669"/>
    <property type="project" value="UniProtKB-KW"/>
</dbReference>
<dbReference type="GO" id="GO:0043177">
    <property type="term" value="F:organic acid binding"/>
    <property type="evidence" value="ECO:0007669"/>
    <property type="project" value="TreeGrafter"/>
</dbReference>
<dbReference type="GO" id="GO:0019825">
    <property type="term" value="F:oxygen binding"/>
    <property type="evidence" value="ECO:0007669"/>
    <property type="project" value="InterPro"/>
</dbReference>
<dbReference type="GO" id="GO:0005344">
    <property type="term" value="F:oxygen carrier activity"/>
    <property type="evidence" value="ECO:0007669"/>
    <property type="project" value="UniProtKB-KW"/>
</dbReference>
<dbReference type="GO" id="GO:0004601">
    <property type="term" value="F:peroxidase activity"/>
    <property type="evidence" value="ECO:0007669"/>
    <property type="project" value="TreeGrafter"/>
</dbReference>
<dbReference type="GO" id="GO:0042744">
    <property type="term" value="P:hydrogen peroxide catabolic process"/>
    <property type="evidence" value="ECO:0007669"/>
    <property type="project" value="TreeGrafter"/>
</dbReference>
<dbReference type="CDD" id="cd08925">
    <property type="entry name" value="Hb-beta-like"/>
    <property type="match status" value="1"/>
</dbReference>
<dbReference type="FunFam" id="1.10.490.10:FF:000001">
    <property type="entry name" value="Hemoglobin subunit beta"/>
    <property type="match status" value="1"/>
</dbReference>
<dbReference type="Gene3D" id="1.10.490.10">
    <property type="entry name" value="Globins"/>
    <property type="match status" value="1"/>
</dbReference>
<dbReference type="InterPro" id="IPR000971">
    <property type="entry name" value="Globin"/>
</dbReference>
<dbReference type="InterPro" id="IPR009050">
    <property type="entry name" value="Globin-like_sf"/>
</dbReference>
<dbReference type="InterPro" id="IPR012292">
    <property type="entry name" value="Globin/Proto"/>
</dbReference>
<dbReference type="InterPro" id="IPR002337">
    <property type="entry name" value="Hemoglobin_b"/>
</dbReference>
<dbReference type="InterPro" id="IPR050056">
    <property type="entry name" value="Hemoglobin_oxygen_transport"/>
</dbReference>
<dbReference type="PANTHER" id="PTHR11442">
    <property type="entry name" value="HEMOGLOBIN FAMILY MEMBER"/>
    <property type="match status" value="1"/>
</dbReference>
<dbReference type="PANTHER" id="PTHR11442:SF42">
    <property type="entry name" value="HEMOGLOBIN SUBUNIT BETA"/>
    <property type="match status" value="1"/>
</dbReference>
<dbReference type="Pfam" id="PF00042">
    <property type="entry name" value="Globin"/>
    <property type="match status" value="1"/>
</dbReference>
<dbReference type="PRINTS" id="PR00814">
    <property type="entry name" value="BETAHAEM"/>
</dbReference>
<dbReference type="SUPFAM" id="SSF46458">
    <property type="entry name" value="Globin-like"/>
    <property type="match status" value="1"/>
</dbReference>
<dbReference type="PROSITE" id="PS01033">
    <property type="entry name" value="GLOBIN"/>
    <property type="match status" value="1"/>
</dbReference>
<accession>P68234</accession>
<accession>P02034</accession>
<evidence type="ECO:0000250" key="1">
    <source>
        <dbReference type="UniProtKB" id="P02086"/>
    </source>
</evidence>
<evidence type="ECO:0000250" key="2">
    <source>
        <dbReference type="UniProtKB" id="P18983"/>
    </source>
</evidence>
<evidence type="ECO:0000250" key="3">
    <source>
        <dbReference type="UniProtKB" id="P68871"/>
    </source>
</evidence>
<evidence type="ECO:0000255" key="4">
    <source>
        <dbReference type="PROSITE-ProRule" id="PRU00238"/>
    </source>
</evidence>
<sequence>MVHLTGEEKAAVTALWGKVNVDEVGGEALGRLLVVYPWTQRFFESFGDLSTPDAVMSNPKVKAHGKKVLGAFSDGLAHLDNLKGTFAQLSELHCDKLHVDPENFRLLGNVLVCVLAHHFGKEFTPQLQAAYQKVVAGVANALAHKYH</sequence>
<proteinExistence type="evidence at protein level"/>